<sequence length="426" mass="48356">MCDRNGGRRLRQWLIEQIDSSMYPGLIWENEEKSMFRIPWKHAGKQDYNQEVDASIFKAWAVFKGKFKEGDKAEPATWKTRLRCALNKSPDFEEVTDRSQLDISEPYKVYRIVPEEEQKCKLGVATAGCVNEVTEMECGRSEIDELIKEPSVDDYMGMIKRSPSPPEACRSQLLPDWWAQQPSTGVPLVTGYTTYDAHHSAFSQMVISFYYGGKLVGQATTTCPEGCRLSLSQPGLPGTKLYGPEGLELVRFPPADAIPSERQRQVTRKLFGHLERGVLLHSSRQGVFVKRLCQGRVFCSGNAVVCKGRPNKLERDEVVQVFDTSQFFRELQQFYNSQGRLPDGRVVLCFGEEFPDMAPLRSKLILVQIEQLYVRQLAEEAGKSCGAGSVMQAPEEPPPDQVFRMFPDICASHQRSFFRENQQITV</sequence>
<reference key="1">
    <citation type="journal article" date="1992" name="J. Biol. Chem.">
        <title>Human interferon consensus sequence binding protein is a negative regulator of enhancer elements common to interferon-inducible genes.</title>
        <authorList>
            <person name="Weisz A."/>
            <person name="Marx P."/>
            <person name="Sharf R."/>
            <person name="Appella E."/>
            <person name="Driggers P.H."/>
            <person name="Ozato K."/>
            <person name="Levi B.-Z."/>
        </authorList>
    </citation>
    <scope>NUCLEOTIDE SEQUENCE [MRNA]</scope>
    <scope>TISSUE SPECIFICITY</scope>
    <scope>INDUCTION BY IFNG</scope>
    <source>
        <tissue>Lung</tissue>
        <tissue>Monocyte</tissue>
    </source>
</reference>
<reference key="2">
    <citation type="submission" date="1997-07" db="EMBL/GenBank/DDBJ databases">
        <authorList>
            <person name="Schmidt M."/>
        </authorList>
    </citation>
    <scope>SEQUENCE REVISION</scope>
</reference>
<reference key="3">
    <citation type="journal article" date="2004" name="Genome Res.">
        <title>The status, quality, and expansion of the NIH full-length cDNA project: the Mammalian Gene Collection (MGC).</title>
        <authorList>
            <consortium name="The MGC Project Team"/>
        </authorList>
    </citation>
    <scope>NUCLEOTIDE SEQUENCE [LARGE SCALE MRNA]</scope>
    <source>
        <tissue>Brain</tissue>
    </source>
</reference>
<reference key="4">
    <citation type="journal article" date="2000" name="J. Biol. Chem.">
        <title>Interaction between interferon consensus sequence-binding protein and COP9/signalosome subunit CSN2 (Trip15). A possible link between interferon regulatory factor signaling and the COP9/signalosome.</title>
        <authorList>
            <person name="Cohen H."/>
            <person name="Azriel A."/>
            <person name="Cohen T."/>
            <person name="Meraro D."/>
            <person name="Hashmueli S."/>
            <person name="Bech-Otschir D."/>
            <person name="Kraft R."/>
            <person name="Dubiel W."/>
            <person name="Levi B.Z."/>
        </authorList>
    </citation>
    <scope>INTERACTION WITH COPS2</scope>
</reference>
<reference key="5">
    <citation type="journal article" date="2012" name="J. Exp. Med.">
        <title>BCL6 positively regulates AID and germinal center gene expression via repression of miR-155.</title>
        <authorList>
            <person name="Basso K."/>
            <person name="Schneider C."/>
            <person name="Shen Q."/>
            <person name="Holmes A.B."/>
            <person name="Setty M."/>
            <person name="Leslie C."/>
            <person name="Dalla-Favera R."/>
        </authorList>
    </citation>
    <scope>INDUCTION</scope>
    <scope>SUBCELLULAR LOCATION</scope>
    <scope>TISSUE SPECIFICITY</scope>
</reference>
<reference key="6">
    <citation type="journal article" date="2006" name="Science">
        <title>The consensus coding sequences of human breast and colorectal cancers.</title>
        <authorList>
            <person name="Sjoeblom T."/>
            <person name="Jones S."/>
            <person name="Wood L.D."/>
            <person name="Parsons D.W."/>
            <person name="Lin J."/>
            <person name="Barber T.D."/>
            <person name="Mandelker D."/>
            <person name="Leary R.J."/>
            <person name="Ptak J."/>
            <person name="Silliman N."/>
            <person name="Szabo S."/>
            <person name="Buckhaults P."/>
            <person name="Farrell C."/>
            <person name="Meeh P."/>
            <person name="Markowitz S.D."/>
            <person name="Willis J."/>
            <person name="Dawson D."/>
            <person name="Willson J.K.V."/>
            <person name="Gazdar A.F."/>
            <person name="Hartigan J."/>
            <person name="Wu L."/>
            <person name="Liu C."/>
            <person name="Parmigiani G."/>
            <person name="Park B.H."/>
            <person name="Bachman K.E."/>
            <person name="Papadopoulos N."/>
            <person name="Vogelstein B."/>
            <person name="Kinzler K.W."/>
            <person name="Velculescu V.E."/>
        </authorList>
    </citation>
    <scope>VARIANTS [LARGE SCALE ANALYSIS] LYS-81 AND THR-197</scope>
</reference>
<reference key="7">
    <citation type="journal article" date="2011" name="N. Engl. J. Med.">
        <title>IRF8 mutations and human dendritic-cell immunodeficiency.</title>
        <authorList>
            <person name="Hambleton S."/>
            <person name="Salem S."/>
            <person name="Bustamante J."/>
            <person name="Bigley V."/>
            <person name="Boisson-Dupuis S."/>
            <person name="Azevedo J."/>
            <person name="Fortin A."/>
            <person name="Haniffa M."/>
            <person name="Ceron-Gutierrez L."/>
            <person name="Bacon C.M."/>
            <person name="Menon G."/>
            <person name="Trouillet C."/>
            <person name="McDonald D."/>
            <person name="Carey P."/>
            <person name="Ginhoux F."/>
            <person name="Alsina L."/>
            <person name="Zumwalt T.J."/>
            <person name="Kong X.F."/>
            <person name="Kumararatne D."/>
            <person name="Butler K."/>
            <person name="Hubeau M."/>
            <person name="Feinberg J."/>
            <person name="Al-Muhsen S."/>
            <person name="Cant A."/>
            <person name="Abel L."/>
            <person name="Chaussabel D."/>
            <person name="Doffinger R."/>
            <person name="Talesnik E."/>
            <person name="Grumach A."/>
            <person name="Duarte A."/>
            <person name="Abarca K."/>
            <person name="Moraes-Vasconcelos D."/>
            <person name="Burk D."/>
            <person name="Berghuis A."/>
            <person name="Geissmann F."/>
            <person name="Collin M."/>
            <person name="Casanova J.L."/>
            <person name="Gros P."/>
        </authorList>
    </citation>
    <scope>VARIANT IMD32A ALA-80</scope>
    <scope>VARIANT IMD32B GLU-108</scope>
    <scope>CHARACTERIZATION OF VARIANT IMD32A ALA-80</scope>
    <scope>CHARACTERIZATION OF VARIANT IMD32B GLU-108</scope>
    <scope>INVOLVEMENT IN IMD32A</scope>
    <scope>INVOLVEMENT IN IMD32B</scope>
</reference>
<reference key="8">
    <citation type="journal article" date="2014" name="Blood">
        <title>Functional characterization of the human dendritic cell immunodeficiency associated with the IRF8(K108E) mutation.</title>
        <authorList>
            <person name="Salem S."/>
            <person name="Langlais D."/>
            <person name="Lefebvre F."/>
            <person name="Bourque G."/>
            <person name="Bigley V."/>
            <person name="Haniffa M."/>
            <person name="Casanova J.L."/>
            <person name="Burk D."/>
            <person name="Berghuis A."/>
            <person name="Butler K.M."/>
            <person name="Leahy T.R."/>
            <person name="Hambleton S."/>
            <person name="Gros P."/>
        </authorList>
    </citation>
    <scope>CHARACTERIZATION OF VARIANT IMD32B GLU-108</scope>
    <scope>FUNCTION</scope>
    <scope>SUBCELLULAR LOCATION</scope>
    <scope>UBIQUITINATION</scope>
    <scope>DESUMOYLATION</scope>
    <scope>MUTAGENESIS OF LYS-108</scope>
</reference>
<reference key="9">
    <citation type="journal article" date="2018" name="Front. Immunol.">
        <title>Signaling lymphocyte activation molecule family 5 enhances autophagy and fine-tunes cytokine response in monocyte-derived dendritic cells via stabilization of interferon regulatory factor 8.</title>
        <authorList>
            <person name="Agod Z."/>
            <person name="Pazmandi K."/>
            <person name="Bencze D."/>
            <person name="Vereb G."/>
            <person name="Biro T."/>
            <person name="Szabo A."/>
            <person name="Rajnavolgyi E."/>
            <person name="Bacsi A."/>
            <person name="Engel P."/>
            <person name="Lanyi A."/>
        </authorList>
    </citation>
    <scope>FUNCTION</scope>
</reference>
<reference key="10">
    <citation type="journal article" date="2021" name="J. Exp. Med.">
        <title>Constrained chromatin accessibility in PU.1-mutated agammaglobulinemia patients.</title>
        <authorList>
            <person name="Le Coz C."/>
            <person name="Nguyen D.N."/>
            <person name="Su C."/>
            <person name="Nolan B.E."/>
            <person name="Albrecht A.V."/>
            <person name="Xhani S."/>
            <person name="Sun D."/>
            <person name="Demaree B."/>
            <person name="Pillarisetti P."/>
            <person name="Khanna C."/>
            <person name="Wright F."/>
            <person name="Chen P.A."/>
            <person name="Yoon S."/>
            <person name="Stiegler A.L."/>
            <person name="Maurer K."/>
            <person name="Garifallou J.P."/>
            <person name="Rymaszewski A."/>
            <person name="Kroft S.H."/>
            <person name="Olson T.S."/>
            <person name="Seif A.E."/>
            <person name="Wertheim G."/>
            <person name="Grant S.F.A."/>
            <person name="Vo L.T."/>
            <person name="Puck J.M."/>
            <person name="Sullivan K.E."/>
            <person name="Routes J.M."/>
            <person name="Zakharova V."/>
            <person name="Shcherbina A."/>
            <person name="Mukhina A."/>
            <person name="Rudy N.L."/>
            <person name="Hurst A.C.E."/>
            <person name="Atkinson T.P."/>
            <person name="Boggon T.J."/>
            <person name="Hakonarson H."/>
            <person name="Abate A.R."/>
            <person name="Hajjar J."/>
            <person name="Nicholas S.K."/>
            <person name="Lupski J.R."/>
            <person name="Verbsky J."/>
            <person name="Chinn I.K."/>
            <person name="Gonzalez M.V."/>
            <person name="Wells A.D."/>
            <person name="Marson A."/>
            <person name="Poon G.M.K."/>
            <person name="Romberg N."/>
        </authorList>
    </citation>
    <scope>INTERACTION WITH SPI1</scope>
</reference>
<feature type="chain" id="PRO_0000154564" description="Interferon regulatory factor 8">
    <location>
        <begin position="1"/>
        <end position="426"/>
    </location>
</feature>
<feature type="DNA-binding region" description="IRF tryptophan pentad repeat" evidence="3">
    <location>
        <begin position="7"/>
        <end position="114"/>
    </location>
</feature>
<feature type="sequence variant" id="VAR_070084" description="In IMD32A; impairs transcriptional activity by disrupting the interaction between IRF8 and DNA; dbSNP:rs397514711." evidence="7">
    <original>T</original>
    <variation>A</variation>
    <location>
        <position position="80"/>
    </location>
</feature>
<feature type="sequence variant" id="VAR_036490" description="In a breast cancer sample; somatic mutation." evidence="6">
    <original>R</original>
    <variation>K</variation>
    <location>
        <position position="81"/>
    </location>
</feature>
<feature type="sequence variant" id="VAR_070085" description="In IMD32B; in resting macrophages, no effect on cytoplasmic subcellular localization; loss of nuclear subcellular localization upon IFN-gamma induction; decreased protein abundance; increased proteasome-dependent degradation; increased ubiquitination and sumoylation; loss of transcriptional repressor activity; loss of IRF1-dependent transcriptional repressor activity; loss of IRF1-dependent transcriptional activator activity; impairs transcriptional activity by disrupting the interaction between IRF8 and DNA; dbSNP:rs397514710." evidence="7 9">
    <original>K</original>
    <variation>E</variation>
    <location>
        <position position="108"/>
    </location>
</feature>
<feature type="sequence variant" id="VAR_036491" description="In a breast cancer sample; somatic mutation; dbSNP:rs1372132995." evidence="6">
    <original>A</original>
    <variation>T</variation>
    <location>
        <position position="197"/>
    </location>
</feature>
<feature type="mutagenesis site" description="In resting macrophages, no effect on cytoplasmic subcellular localization. Decreased nuclear subcellular localization upon IFN-gamma induction. Partial loss of IRF1-dependent transcriptional activator activity." evidence="9">
    <original>K</original>
    <variation>H</variation>
    <location>
        <position position="108"/>
    </location>
</feature>
<feature type="mutagenesis site" description="In resting macrophages, no effect on cytoplasmic subcellular localization. Loss of nuclear subcellular localization upon IFN-gamma induction. Loss of IRF1-dependent transcriptional activator activity." evidence="9">
    <original>K</original>
    <variation>Q</variation>
    <location>
        <position position="108"/>
    </location>
</feature>
<feature type="mutagenesis site" description="In resting macrophages, no effect on cytoplasmic subcellular localization. No effect on nuclear subcellular localization upon IFN-gamma induction. No effect on transcriptional activator activity. No effect on IRF1-dependent transcriptional activator activity." evidence="9">
    <original>K</original>
    <variation>R</variation>
    <location>
        <position position="108"/>
    </location>
</feature>
<protein>
    <recommendedName>
        <fullName evidence="14">Interferon regulatory factor 8</fullName>
        <shortName>IRF-8</shortName>
    </recommendedName>
    <alternativeName>
        <fullName evidence="12">Interferon consensus sequence-binding protein</fullName>
        <shortName evidence="12">H-ICSBP</shortName>
        <shortName evidence="12">ICSBP</shortName>
    </alternativeName>
</protein>
<proteinExistence type="evidence at protein level"/>
<keyword id="KW-0010">Activator</keyword>
<keyword id="KW-0072">Autophagy</keyword>
<keyword id="KW-0963">Cytoplasm</keyword>
<keyword id="KW-0225">Disease variant</keyword>
<keyword id="KW-0238">DNA-binding</keyword>
<keyword id="KW-0539">Nucleus</keyword>
<keyword id="KW-1267">Proteomics identification</keyword>
<keyword id="KW-1185">Reference proteome</keyword>
<keyword id="KW-0678">Repressor</keyword>
<keyword id="KW-0804">Transcription</keyword>
<keyword id="KW-0805">Transcription regulation</keyword>
<keyword id="KW-0832">Ubl conjugation</keyword>
<gene>
    <name evidence="13 15" type="primary">IRF8</name>
    <name evidence="12" type="synonym">ICSBP1</name>
</gene>
<accession>Q02556</accession>
<accession>A0AV82</accession>
<organism>
    <name type="scientific">Homo sapiens</name>
    <name type="common">Human</name>
    <dbReference type="NCBI Taxonomy" id="9606"/>
    <lineage>
        <taxon>Eukaryota</taxon>
        <taxon>Metazoa</taxon>
        <taxon>Chordata</taxon>
        <taxon>Craniata</taxon>
        <taxon>Vertebrata</taxon>
        <taxon>Euteleostomi</taxon>
        <taxon>Mammalia</taxon>
        <taxon>Eutheria</taxon>
        <taxon>Euarchontoglires</taxon>
        <taxon>Primates</taxon>
        <taxon>Haplorrhini</taxon>
        <taxon>Catarrhini</taxon>
        <taxon>Hominidae</taxon>
        <taxon>Homo</taxon>
    </lineage>
</organism>
<name>IRF8_HUMAN</name>
<comment type="function">
    <text evidence="2 9 10">Transcription factor that specifically binds to the upstream regulatory region of type I interferon (IFN) and IFN-inducible MHC class I genes (the interferon consensus sequence (ICS)) (PubMed:25122610). Can both act as a transcriptional activator or repressor (By similarity). Plays a negative regulatory role in cells of the immune system (By similarity). Involved in CD8(+) dendritic cell differentiation by forming a complex with the BATF-JUNB heterodimer in immune cells, leading to recognition of AICE sequence (5'-TGAnTCA/GAAA-3'), an immune-specific regulatory element, followed by cooperative binding of BATF and IRF8 and activation of genes (By similarity). Required for the development of plasmacytoid dendritic cells (pDCs), which produce most of the type I IFN in response to viral infection (By similarity). Positively regulates macroautophagy in dendritic cells (PubMed:29434592). Acts as a transcriptional repressor of osteoclast differentiation factors such as NFATC1 and EEIG1 (By similarity).</text>
</comment>
<comment type="subunit">
    <text evidence="1 4 11">Interacts (via C-terminus) with TRIM21 (via C-terminus). Interacts with the BATF-JUNB heterodimer. Interacts with BATF (via bZIP domain); the interaction is direct (By similarity). Interacts with COPS2. Interacts with SPI1 (PubMed:33951726).</text>
</comment>
<comment type="interaction">
    <interactant intactId="EBI-2866563">
        <id>Q02556</id>
    </interactant>
    <interactant intactId="EBI-6115643">
        <id>O14896</id>
        <label>IRF6</label>
    </interactant>
    <organismsDiffer>false</organismsDiffer>
    <experiments>3</experiments>
</comment>
<comment type="interaction">
    <interactant intactId="EBI-2866563">
        <id>Q02556</id>
    </interactant>
    <interactant intactId="EBI-748974">
        <id>Q96CV9</id>
        <label>OPTN</label>
    </interactant>
    <organismsDiffer>false</organismsDiffer>
    <experiments>3</experiments>
</comment>
<comment type="subcellular location">
    <subcellularLocation>
        <location evidence="8 9">Nucleus</location>
    </subcellularLocation>
    <subcellularLocation>
        <location evidence="9">Cytoplasm</location>
    </subcellularLocation>
    <text evidence="9">In resting macrophages, localizes in the cytoplasm. Translocated in the nucleus upon IFN-gamma induction.</text>
</comment>
<comment type="tissue specificity">
    <text evidence="5 8">Predominantly expressed in lymphoid tissues.</text>
</comment>
<comment type="induction">
    <text evidence="5 8">By IFNG/IFN-gamma. Negatively regulated by microRNA-155 (miR155).</text>
</comment>
<comment type="PTM">
    <text evidence="1 9">Ubiquitinated (PubMed:25122610). Ubiquitination by TRIM21 in macrophages, a process that is strongly increased upon interferon gamma stimulation, leds to the enhanced transcriptional activity of target cytokine genes (By similarity). Ubiquitination leads to its degradation by the proteasome (PubMed:25122610).</text>
</comment>
<comment type="PTM">
    <text evidence="9">Sumoylated with SUMO3. Desumoylated by SENP1.</text>
</comment>
<comment type="disease" evidence="7">
    <disease id="DI-03810">
        <name>Immunodeficiency 32A</name>
        <acronym>IMD32A</acronym>
        <description>An immunologic disorder characterized by abnormal peripheral blood myeloid phenotype with a marked loss of CD11C-positive/CD1C dendritic cells, resulting in selective susceptibility to mycobacterial infections.</description>
        <dbReference type="MIM" id="614893"/>
    </disease>
    <text>The disease is caused by variants affecting the gene represented in this entry.</text>
</comment>
<comment type="disease" evidence="7 9">
    <disease id="DI-03811">
        <name>Immunodeficiency 32B</name>
        <acronym>IMD32B</acronym>
        <description>An autosomal recessive primary immunodeficiency characterized by monocyte and dendritic cell deficiency, myeloproliferation, and susceptibility to severe opportunistic infections, including disseminated BCG infection and oral candidiasis.</description>
        <dbReference type="MIM" id="226990"/>
    </disease>
    <text>The disease is caused by variants affecting the gene represented in this entry.</text>
</comment>
<comment type="similarity">
    <text evidence="3">Belongs to the IRF family.</text>
</comment>
<evidence type="ECO:0000250" key="1"/>
<evidence type="ECO:0000250" key="2">
    <source>
        <dbReference type="UniProtKB" id="P23611"/>
    </source>
</evidence>
<evidence type="ECO:0000255" key="3">
    <source>
        <dbReference type="PROSITE-ProRule" id="PRU00840"/>
    </source>
</evidence>
<evidence type="ECO:0000269" key="4">
    <source>
    </source>
</evidence>
<evidence type="ECO:0000269" key="5">
    <source>
    </source>
</evidence>
<evidence type="ECO:0000269" key="6">
    <source>
    </source>
</evidence>
<evidence type="ECO:0000269" key="7">
    <source>
    </source>
</evidence>
<evidence type="ECO:0000269" key="8">
    <source>
    </source>
</evidence>
<evidence type="ECO:0000269" key="9">
    <source>
    </source>
</evidence>
<evidence type="ECO:0000269" key="10">
    <source>
    </source>
</evidence>
<evidence type="ECO:0000269" key="11">
    <source>
    </source>
</evidence>
<evidence type="ECO:0000303" key="12">
    <source>
    </source>
</evidence>
<evidence type="ECO:0000303" key="13">
    <source>
    </source>
</evidence>
<evidence type="ECO:0000305" key="14"/>
<evidence type="ECO:0000312" key="15">
    <source>
        <dbReference type="HGNC" id="HGNC:5358"/>
    </source>
</evidence>
<dbReference type="EMBL" id="M91196">
    <property type="protein sequence ID" value="AAB63813.1"/>
    <property type="molecule type" value="mRNA"/>
</dbReference>
<dbReference type="EMBL" id="BC126247">
    <property type="protein sequence ID" value="AAI26248.1"/>
    <property type="molecule type" value="mRNA"/>
</dbReference>
<dbReference type="CCDS" id="CCDS10956.1"/>
<dbReference type="PIR" id="A45064">
    <property type="entry name" value="A45064"/>
</dbReference>
<dbReference type="RefSeq" id="NP_002154.1">
    <property type="nucleotide sequence ID" value="NM_002163.4"/>
</dbReference>
<dbReference type="SMR" id="Q02556"/>
<dbReference type="BioGRID" id="109621">
    <property type="interactions" value="56"/>
</dbReference>
<dbReference type="CORUM" id="Q02556"/>
<dbReference type="FunCoup" id="Q02556">
    <property type="interactions" value="2221"/>
</dbReference>
<dbReference type="IntAct" id="Q02556">
    <property type="interactions" value="41"/>
</dbReference>
<dbReference type="STRING" id="9606.ENSP00000268638"/>
<dbReference type="iPTMnet" id="Q02556"/>
<dbReference type="PhosphoSitePlus" id="Q02556"/>
<dbReference type="BioMuta" id="IRF8"/>
<dbReference type="DMDM" id="6016308"/>
<dbReference type="jPOST" id="Q02556"/>
<dbReference type="MassIVE" id="Q02556"/>
<dbReference type="PaxDb" id="9606-ENSP00000268638"/>
<dbReference type="PeptideAtlas" id="Q02556"/>
<dbReference type="ProteomicsDB" id="58110"/>
<dbReference type="Antibodypedia" id="1058">
    <property type="antibodies" value="455 antibodies from 41 providers"/>
</dbReference>
<dbReference type="DNASU" id="3394"/>
<dbReference type="Ensembl" id="ENST00000268638.10">
    <property type="protein sequence ID" value="ENSP00000268638.4"/>
    <property type="gene ID" value="ENSG00000140968.12"/>
</dbReference>
<dbReference type="Ensembl" id="ENST00000564803.6">
    <property type="protein sequence ID" value="ENSP00000456992.2"/>
    <property type="gene ID" value="ENSG00000140968.12"/>
</dbReference>
<dbReference type="Ensembl" id="ENST00000696887.1">
    <property type="protein sequence ID" value="ENSP00000512953.1"/>
    <property type="gene ID" value="ENSG00000140968.12"/>
</dbReference>
<dbReference type="GeneID" id="3394"/>
<dbReference type="KEGG" id="hsa:3394"/>
<dbReference type="MANE-Select" id="ENST00000268638.10">
    <property type="protein sequence ID" value="ENSP00000268638.4"/>
    <property type="RefSeq nucleotide sequence ID" value="NM_002163.4"/>
    <property type="RefSeq protein sequence ID" value="NP_002154.1"/>
</dbReference>
<dbReference type="UCSC" id="uc002fjh.4">
    <property type="organism name" value="human"/>
</dbReference>
<dbReference type="AGR" id="HGNC:5358"/>
<dbReference type="CTD" id="3394"/>
<dbReference type="DisGeNET" id="3394"/>
<dbReference type="GeneCards" id="IRF8"/>
<dbReference type="HGNC" id="HGNC:5358">
    <property type="gene designation" value="IRF8"/>
</dbReference>
<dbReference type="HPA" id="ENSG00000140968">
    <property type="expression patterns" value="Tissue enhanced (lymphoid)"/>
</dbReference>
<dbReference type="MalaCards" id="IRF8"/>
<dbReference type="MIM" id="226990">
    <property type="type" value="phenotype"/>
</dbReference>
<dbReference type="MIM" id="601565">
    <property type="type" value="gene"/>
</dbReference>
<dbReference type="MIM" id="614893">
    <property type="type" value="phenotype"/>
</dbReference>
<dbReference type="neXtProt" id="NX_Q02556"/>
<dbReference type="OpenTargets" id="ENSG00000140968"/>
<dbReference type="Orphanet" id="319600">
    <property type="disease" value="Mendelian susceptibility to mycobacterial diseases due to partial IRF8 deficiency"/>
</dbReference>
<dbReference type="PharmGKB" id="PA29606"/>
<dbReference type="VEuPathDB" id="HostDB:ENSG00000140968"/>
<dbReference type="eggNOG" id="ENOG502QT9P">
    <property type="taxonomic scope" value="Eukaryota"/>
</dbReference>
<dbReference type="GeneTree" id="ENSGT00940000158140"/>
<dbReference type="InParanoid" id="Q02556"/>
<dbReference type="OMA" id="EICASHQ"/>
<dbReference type="OrthoDB" id="9922389at2759"/>
<dbReference type="PAN-GO" id="Q02556">
    <property type="GO annotations" value="5 GO annotations based on evolutionary models"/>
</dbReference>
<dbReference type="PhylomeDB" id="Q02556"/>
<dbReference type="TreeFam" id="TF328512"/>
<dbReference type="PathwayCommons" id="Q02556"/>
<dbReference type="Reactome" id="R-HSA-877300">
    <property type="pathway name" value="Interferon gamma signaling"/>
</dbReference>
<dbReference type="Reactome" id="R-HSA-909733">
    <property type="pathway name" value="Interferon alpha/beta signaling"/>
</dbReference>
<dbReference type="SignaLink" id="Q02556"/>
<dbReference type="SIGNOR" id="Q02556"/>
<dbReference type="BioGRID-ORCS" id="3394">
    <property type="hits" value="41 hits in 1181 CRISPR screens"/>
</dbReference>
<dbReference type="ChiTaRS" id="IRF8">
    <property type="organism name" value="human"/>
</dbReference>
<dbReference type="GeneWiki" id="IRF8"/>
<dbReference type="GenomeRNAi" id="3394"/>
<dbReference type="Pharos" id="Q02556">
    <property type="development level" value="Tbio"/>
</dbReference>
<dbReference type="PRO" id="PR:Q02556"/>
<dbReference type="Proteomes" id="UP000005640">
    <property type="component" value="Chromosome 16"/>
</dbReference>
<dbReference type="RNAct" id="Q02556">
    <property type="molecule type" value="protein"/>
</dbReference>
<dbReference type="Bgee" id="ENSG00000140968">
    <property type="expression patterns" value="Expressed in monocyte and 188 other cell types or tissues"/>
</dbReference>
<dbReference type="ExpressionAtlas" id="Q02556">
    <property type="expression patterns" value="baseline and differential"/>
</dbReference>
<dbReference type="GO" id="GO:0000785">
    <property type="term" value="C:chromatin"/>
    <property type="evidence" value="ECO:0000247"/>
    <property type="project" value="NTNU_SB"/>
</dbReference>
<dbReference type="GO" id="GO:0005737">
    <property type="term" value="C:cytoplasm"/>
    <property type="evidence" value="ECO:0000314"/>
    <property type="project" value="UniProtKB"/>
</dbReference>
<dbReference type="GO" id="GO:0005829">
    <property type="term" value="C:cytosol"/>
    <property type="evidence" value="ECO:0000304"/>
    <property type="project" value="Reactome"/>
</dbReference>
<dbReference type="GO" id="GO:0005654">
    <property type="term" value="C:nucleoplasm"/>
    <property type="evidence" value="ECO:0000314"/>
    <property type="project" value="HPA"/>
</dbReference>
<dbReference type="GO" id="GO:0005634">
    <property type="term" value="C:nucleus"/>
    <property type="evidence" value="ECO:0000314"/>
    <property type="project" value="UniProtKB"/>
</dbReference>
<dbReference type="GO" id="GO:0000981">
    <property type="term" value="F:DNA-binding transcription factor activity, RNA polymerase II-specific"/>
    <property type="evidence" value="ECO:0000247"/>
    <property type="project" value="NTNU_SB"/>
</dbReference>
<dbReference type="GO" id="GO:0001227">
    <property type="term" value="F:DNA-binding transcription repressor activity, RNA polymerase II-specific"/>
    <property type="evidence" value="ECO:0000314"/>
    <property type="project" value="NTNU_SB"/>
</dbReference>
<dbReference type="GO" id="GO:0000978">
    <property type="term" value="F:RNA polymerase II cis-regulatory region sequence-specific DNA binding"/>
    <property type="evidence" value="ECO:0000314"/>
    <property type="project" value="NTNU_SB"/>
</dbReference>
<dbReference type="GO" id="GO:1990837">
    <property type="term" value="F:sequence-specific double-stranded DNA binding"/>
    <property type="evidence" value="ECO:0000314"/>
    <property type="project" value="ARUK-UCL"/>
</dbReference>
<dbReference type="GO" id="GO:0006914">
    <property type="term" value="P:autophagy"/>
    <property type="evidence" value="ECO:0007669"/>
    <property type="project" value="UniProtKB-KW"/>
</dbReference>
<dbReference type="GO" id="GO:0071222">
    <property type="term" value="P:cellular response to lipopolysaccharide"/>
    <property type="evidence" value="ECO:0007669"/>
    <property type="project" value="Ensembl"/>
</dbReference>
<dbReference type="GO" id="GO:0071346">
    <property type="term" value="P:cellular response to type II interferon"/>
    <property type="evidence" value="ECO:0000314"/>
    <property type="project" value="UniProtKB"/>
</dbReference>
<dbReference type="GO" id="GO:0042742">
    <property type="term" value="P:defense response to bacterium"/>
    <property type="evidence" value="ECO:0007669"/>
    <property type="project" value="Ensembl"/>
</dbReference>
<dbReference type="GO" id="GO:0042832">
    <property type="term" value="P:defense response to protozoan"/>
    <property type="evidence" value="ECO:0007669"/>
    <property type="project" value="Ensembl"/>
</dbReference>
<dbReference type="GO" id="GO:0097028">
    <property type="term" value="P:dendritic cell differentiation"/>
    <property type="evidence" value="ECO:0000250"/>
    <property type="project" value="UniProtKB"/>
</dbReference>
<dbReference type="GO" id="GO:0002316">
    <property type="term" value="P:follicular B cell differentiation"/>
    <property type="evidence" value="ECO:0007669"/>
    <property type="project" value="Ensembl"/>
</dbReference>
<dbReference type="GO" id="GO:0002314">
    <property type="term" value="P:germinal center B cell differentiation"/>
    <property type="evidence" value="ECO:0007669"/>
    <property type="project" value="Ensembl"/>
</dbReference>
<dbReference type="GO" id="GO:0006955">
    <property type="term" value="P:immune response"/>
    <property type="evidence" value="ECO:0000304"/>
    <property type="project" value="ProtInc"/>
</dbReference>
<dbReference type="GO" id="GO:0002376">
    <property type="term" value="P:immune system process"/>
    <property type="evidence" value="ECO:0000318"/>
    <property type="project" value="GO_Central"/>
</dbReference>
<dbReference type="GO" id="GO:0030099">
    <property type="term" value="P:myeloid cell differentiation"/>
    <property type="evidence" value="ECO:0007669"/>
    <property type="project" value="Ensembl"/>
</dbReference>
<dbReference type="GO" id="GO:0000122">
    <property type="term" value="P:negative regulation of transcription by RNA polymerase II"/>
    <property type="evidence" value="ECO:0000314"/>
    <property type="project" value="UniProtKB"/>
</dbReference>
<dbReference type="GO" id="GO:0006909">
    <property type="term" value="P:phagocytosis"/>
    <property type="evidence" value="ECO:0007669"/>
    <property type="project" value="Ensembl"/>
</dbReference>
<dbReference type="GO" id="GO:0002273">
    <property type="term" value="P:plasmacytoid dendritic cell differentiation"/>
    <property type="evidence" value="ECO:0000250"/>
    <property type="project" value="UniProtKB"/>
</dbReference>
<dbReference type="GO" id="GO:0043065">
    <property type="term" value="P:positive regulation of apoptotic process"/>
    <property type="evidence" value="ECO:0007669"/>
    <property type="project" value="Ensembl"/>
</dbReference>
<dbReference type="GO" id="GO:0032735">
    <property type="term" value="P:positive regulation of interleukin-12 production"/>
    <property type="evidence" value="ECO:0007669"/>
    <property type="project" value="Ensembl"/>
</dbReference>
<dbReference type="GO" id="GO:0045944">
    <property type="term" value="P:positive regulation of transcription by RNA polymerase II"/>
    <property type="evidence" value="ECO:0000314"/>
    <property type="project" value="UniProtKB"/>
</dbReference>
<dbReference type="GO" id="GO:0032729">
    <property type="term" value="P:positive regulation of type II interferon production"/>
    <property type="evidence" value="ECO:0007669"/>
    <property type="project" value="Ensembl"/>
</dbReference>
<dbReference type="GO" id="GO:0006357">
    <property type="term" value="P:regulation of transcription by RNA polymerase II"/>
    <property type="evidence" value="ECO:0000318"/>
    <property type="project" value="GO_Central"/>
</dbReference>
<dbReference type="GO" id="GO:0032479">
    <property type="term" value="P:regulation of type I interferon production"/>
    <property type="evidence" value="ECO:0000250"/>
    <property type="project" value="UniProtKB"/>
</dbReference>
<dbReference type="CDD" id="cd00103">
    <property type="entry name" value="IRF"/>
    <property type="match status" value="1"/>
</dbReference>
<dbReference type="FunFam" id="1.10.10.10:FF:000041">
    <property type="entry name" value="Interferon regulatory factor 4"/>
    <property type="match status" value="1"/>
</dbReference>
<dbReference type="FunFam" id="2.60.200.10:FF:000010">
    <property type="entry name" value="Interferon regulatory factor 8"/>
    <property type="match status" value="1"/>
</dbReference>
<dbReference type="Gene3D" id="2.60.200.10">
    <property type="match status" value="1"/>
</dbReference>
<dbReference type="Gene3D" id="1.10.10.10">
    <property type="entry name" value="Winged helix-like DNA-binding domain superfamily/Winged helix DNA-binding domain"/>
    <property type="match status" value="1"/>
</dbReference>
<dbReference type="InterPro" id="IPR019817">
    <property type="entry name" value="Interferon_reg_fac_CS"/>
</dbReference>
<dbReference type="InterPro" id="IPR001346">
    <property type="entry name" value="Interferon_reg_fact_DNA-bd_dom"/>
</dbReference>
<dbReference type="InterPro" id="IPR019471">
    <property type="entry name" value="Interferon_reg_factor-3"/>
</dbReference>
<dbReference type="InterPro" id="IPR017855">
    <property type="entry name" value="SMAD-like_dom_sf"/>
</dbReference>
<dbReference type="InterPro" id="IPR008984">
    <property type="entry name" value="SMAD_FHA_dom_sf"/>
</dbReference>
<dbReference type="InterPro" id="IPR036388">
    <property type="entry name" value="WH-like_DNA-bd_sf"/>
</dbReference>
<dbReference type="InterPro" id="IPR036390">
    <property type="entry name" value="WH_DNA-bd_sf"/>
</dbReference>
<dbReference type="PANTHER" id="PTHR11949">
    <property type="entry name" value="INTERFERON REGULATORY FACTOR"/>
    <property type="match status" value="1"/>
</dbReference>
<dbReference type="PANTHER" id="PTHR11949:SF7">
    <property type="entry name" value="INTERFERON REGULATORY FACTOR 8"/>
    <property type="match status" value="1"/>
</dbReference>
<dbReference type="Pfam" id="PF00605">
    <property type="entry name" value="IRF"/>
    <property type="match status" value="1"/>
</dbReference>
<dbReference type="Pfam" id="PF10401">
    <property type="entry name" value="IRF-3"/>
    <property type="match status" value="1"/>
</dbReference>
<dbReference type="PRINTS" id="PR00267">
    <property type="entry name" value="INTFRNREGFCT"/>
</dbReference>
<dbReference type="SMART" id="SM00348">
    <property type="entry name" value="IRF"/>
    <property type="match status" value="1"/>
</dbReference>
<dbReference type="SMART" id="SM01243">
    <property type="entry name" value="IRF-3"/>
    <property type="match status" value="1"/>
</dbReference>
<dbReference type="SUPFAM" id="SSF49879">
    <property type="entry name" value="SMAD/FHA domain"/>
    <property type="match status" value="1"/>
</dbReference>
<dbReference type="SUPFAM" id="SSF46785">
    <property type="entry name" value="Winged helix' DNA-binding domain"/>
    <property type="match status" value="1"/>
</dbReference>
<dbReference type="PROSITE" id="PS00601">
    <property type="entry name" value="IRF_1"/>
    <property type="match status" value="1"/>
</dbReference>
<dbReference type="PROSITE" id="PS51507">
    <property type="entry name" value="IRF_2"/>
    <property type="match status" value="1"/>
</dbReference>